<accession>Q9X2N2</accession>
<proteinExistence type="inferred from homology"/>
<comment type="function">
    <text>Hydrolysis of 6-phosphogluconolactone to 6-phosphogluconate.</text>
</comment>
<comment type="catalytic activity">
    <reaction>
        <text>6-phospho-D-glucono-1,5-lactone + H2O = 6-phospho-D-gluconate + H(+)</text>
        <dbReference type="Rhea" id="RHEA:12556"/>
        <dbReference type="ChEBI" id="CHEBI:15377"/>
        <dbReference type="ChEBI" id="CHEBI:15378"/>
        <dbReference type="ChEBI" id="CHEBI:57955"/>
        <dbReference type="ChEBI" id="CHEBI:58759"/>
        <dbReference type="EC" id="3.1.1.31"/>
    </reaction>
</comment>
<comment type="pathway">
    <text>Carbohydrate degradation; pentose phosphate pathway; D-ribulose 5-phosphate from D-glucose 6-phosphate (oxidative stage): step 2/3.</text>
</comment>
<comment type="similarity">
    <text evidence="1">Belongs to the glucosamine/galactosamine-6-phosphate isomerase family. 6-phosphogluconolactonase subfamily.</text>
</comment>
<comment type="sequence caution" evidence="1">
    <conflict type="erroneous initiation">
        <sequence resource="EMBL-CDS" id="AAD22666"/>
    </conflict>
</comment>
<gene>
    <name type="primary">pgl</name>
    <name type="synonym">devB</name>
    <name type="ordered locus">PA3182</name>
</gene>
<name>6PGL_PSEAE</name>
<reference key="1">
    <citation type="submission" date="1999-04" db="EMBL/GenBank/DDBJ databases">
        <authorList>
            <person name="Hager P.W."/>
            <person name="Dail M.B."/>
            <person name="Phibbs P.V. Jr."/>
        </authorList>
    </citation>
    <scope>NUCLEOTIDE SEQUENCE [GENOMIC DNA]</scope>
    <source>
        <strain>ATCC 15692 / DSM 22644 / CIP 104116 / JCM 14847 / LMG 12228 / 1C / PRS 101 / PAO1</strain>
    </source>
</reference>
<reference key="2">
    <citation type="journal article" date="2000" name="Nature">
        <title>Complete genome sequence of Pseudomonas aeruginosa PAO1, an opportunistic pathogen.</title>
        <authorList>
            <person name="Stover C.K."/>
            <person name="Pham X.-Q.T."/>
            <person name="Erwin A.L."/>
            <person name="Mizoguchi S.D."/>
            <person name="Warrener P."/>
            <person name="Hickey M.J."/>
            <person name="Brinkman F.S.L."/>
            <person name="Hufnagle W.O."/>
            <person name="Kowalik D.J."/>
            <person name="Lagrou M."/>
            <person name="Garber R.L."/>
            <person name="Goltry L."/>
            <person name="Tolentino E."/>
            <person name="Westbrock-Wadman S."/>
            <person name="Yuan Y."/>
            <person name="Brody L.L."/>
            <person name="Coulter S.N."/>
            <person name="Folger K.R."/>
            <person name="Kas A."/>
            <person name="Larbig K."/>
            <person name="Lim R.M."/>
            <person name="Smith K.A."/>
            <person name="Spencer D.H."/>
            <person name="Wong G.K.-S."/>
            <person name="Wu Z."/>
            <person name="Paulsen I.T."/>
            <person name="Reizer J."/>
            <person name="Saier M.H. Jr."/>
            <person name="Hancock R.E.W."/>
            <person name="Lory S."/>
            <person name="Olson M.V."/>
        </authorList>
    </citation>
    <scope>NUCLEOTIDE SEQUENCE [LARGE SCALE GENOMIC DNA]</scope>
    <source>
        <strain>ATCC 15692 / DSM 22644 / CIP 104116 / JCM 14847 / LMG 12228 / 1C / PRS 101 / PAO1</strain>
    </source>
</reference>
<feature type="chain" id="PRO_0000090102" description="6-phosphogluconolactonase">
    <location>
        <begin position="1"/>
        <end position="238"/>
    </location>
</feature>
<keyword id="KW-0378">Hydrolase</keyword>
<keyword id="KW-1185">Reference proteome</keyword>
<dbReference type="EC" id="3.1.1.31"/>
<dbReference type="EMBL" id="AF029673">
    <property type="protein sequence ID" value="AAD22666.1"/>
    <property type="status" value="ALT_INIT"/>
    <property type="molecule type" value="Genomic_DNA"/>
</dbReference>
<dbReference type="EMBL" id="AE004091">
    <property type="protein sequence ID" value="AAG06570.1"/>
    <property type="molecule type" value="Genomic_DNA"/>
</dbReference>
<dbReference type="PIR" id="H83247">
    <property type="entry name" value="H83247"/>
</dbReference>
<dbReference type="RefSeq" id="NP_251872.1">
    <property type="nucleotide sequence ID" value="NC_002516.2"/>
</dbReference>
<dbReference type="RefSeq" id="WP_003113441.1">
    <property type="nucleotide sequence ID" value="NZ_QZGE01000023.1"/>
</dbReference>
<dbReference type="SMR" id="Q9X2N2"/>
<dbReference type="STRING" id="208964.PA3182"/>
<dbReference type="PaxDb" id="208964-PA3182"/>
<dbReference type="DNASU" id="882680"/>
<dbReference type="GeneID" id="882680"/>
<dbReference type="KEGG" id="pae:PA3182"/>
<dbReference type="PATRIC" id="fig|208964.12.peg.3326"/>
<dbReference type="PseudoCAP" id="PA3182"/>
<dbReference type="HOGENOM" id="CLU_053947_2_1_6"/>
<dbReference type="InParanoid" id="Q9X2N2"/>
<dbReference type="OrthoDB" id="9810967at2"/>
<dbReference type="PhylomeDB" id="Q9X2N2"/>
<dbReference type="BioCyc" id="PAER208964:G1FZ6-3242-MONOMER"/>
<dbReference type="BRENDA" id="3.1.1.31">
    <property type="organism ID" value="5087"/>
</dbReference>
<dbReference type="UniPathway" id="UPA00115">
    <property type="reaction ID" value="UER00409"/>
</dbReference>
<dbReference type="Proteomes" id="UP000002438">
    <property type="component" value="Chromosome"/>
</dbReference>
<dbReference type="GO" id="GO:0017057">
    <property type="term" value="F:6-phosphogluconolactonase activity"/>
    <property type="evidence" value="ECO:0007669"/>
    <property type="project" value="UniProtKB-EC"/>
</dbReference>
<dbReference type="GO" id="GO:0005975">
    <property type="term" value="P:carbohydrate metabolic process"/>
    <property type="evidence" value="ECO:0007669"/>
    <property type="project" value="InterPro"/>
</dbReference>
<dbReference type="GO" id="GO:0006098">
    <property type="term" value="P:pentose-phosphate shunt"/>
    <property type="evidence" value="ECO:0007669"/>
    <property type="project" value="UniProtKB-UniPathway"/>
</dbReference>
<dbReference type="CDD" id="cd01400">
    <property type="entry name" value="6PGL"/>
    <property type="match status" value="1"/>
</dbReference>
<dbReference type="Gene3D" id="3.40.50.1360">
    <property type="match status" value="1"/>
</dbReference>
<dbReference type="InterPro" id="IPR005900">
    <property type="entry name" value="6-phosphogluconolactonase_DevB"/>
</dbReference>
<dbReference type="InterPro" id="IPR006148">
    <property type="entry name" value="Glc/Gal-6P_isomerase"/>
</dbReference>
<dbReference type="InterPro" id="IPR037171">
    <property type="entry name" value="NagB/RpiA_transferase-like"/>
</dbReference>
<dbReference type="InterPro" id="IPR039104">
    <property type="entry name" value="PGLS"/>
</dbReference>
<dbReference type="NCBIfam" id="TIGR01198">
    <property type="entry name" value="pgl"/>
    <property type="match status" value="1"/>
</dbReference>
<dbReference type="PANTHER" id="PTHR11054">
    <property type="entry name" value="6-PHOSPHOGLUCONOLACTONASE"/>
    <property type="match status" value="1"/>
</dbReference>
<dbReference type="PANTHER" id="PTHR11054:SF0">
    <property type="entry name" value="6-PHOSPHOGLUCONOLACTONASE"/>
    <property type="match status" value="1"/>
</dbReference>
<dbReference type="Pfam" id="PF01182">
    <property type="entry name" value="Glucosamine_iso"/>
    <property type="match status" value="1"/>
</dbReference>
<dbReference type="SUPFAM" id="SSF100950">
    <property type="entry name" value="NagB/RpiA/CoA transferase-like"/>
    <property type="match status" value="1"/>
</dbReference>
<organism>
    <name type="scientific">Pseudomonas aeruginosa (strain ATCC 15692 / DSM 22644 / CIP 104116 / JCM 14847 / LMG 12228 / 1C / PRS 101 / PAO1)</name>
    <dbReference type="NCBI Taxonomy" id="208964"/>
    <lineage>
        <taxon>Bacteria</taxon>
        <taxon>Pseudomonadati</taxon>
        <taxon>Pseudomonadota</taxon>
        <taxon>Gammaproteobacteria</taxon>
        <taxon>Pseudomonadales</taxon>
        <taxon>Pseudomonadaceae</taxon>
        <taxon>Pseudomonas</taxon>
    </lineage>
</organism>
<evidence type="ECO:0000305" key="1"/>
<sequence>MAISELKLPAGVGLQVWGSAAEQARGLAAEVAGRLRSALAEQGQALLVVSGGRSPVAFLEALSEEPLDWSRITVSLADERWVPESHADSNAGLVRRHLLRGEAAKARFIGLYQPAASLEEAAELADHHLHELPLPIDVLVLGMGDDGHTASLFPNSPGLDLAMDPQGTRRCLPMWAPSVPHQRLTLPRAVLAAAKVQLLAIQGQSKLATLNAALAVEDERRMPVRAFLRAPLTIHWYP</sequence>
<protein>
    <recommendedName>
        <fullName>6-phosphogluconolactonase</fullName>
        <shortName>6PGL</shortName>
        <ecNumber>3.1.1.31</ecNumber>
    </recommendedName>
</protein>